<gene>
    <name evidence="1" type="primary">aroK</name>
    <name type="ordered locus">BQ13270</name>
</gene>
<proteinExistence type="inferred from homology"/>
<keyword id="KW-0028">Amino-acid biosynthesis</keyword>
<keyword id="KW-0057">Aromatic amino acid biosynthesis</keyword>
<keyword id="KW-0067">ATP-binding</keyword>
<keyword id="KW-0963">Cytoplasm</keyword>
<keyword id="KW-0418">Kinase</keyword>
<keyword id="KW-0460">Magnesium</keyword>
<keyword id="KW-0479">Metal-binding</keyword>
<keyword id="KW-0547">Nucleotide-binding</keyword>
<keyword id="KW-0808">Transferase</keyword>
<accession>Q6G1H5</accession>
<organism>
    <name type="scientific">Bartonella quintana (strain Toulouse)</name>
    <name type="common">Rochalimaea quintana</name>
    <dbReference type="NCBI Taxonomy" id="283165"/>
    <lineage>
        <taxon>Bacteria</taxon>
        <taxon>Pseudomonadati</taxon>
        <taxon>Pseudomonadota</taxon>
        <taxon>Alphaproteobacteria</taxon>
        <taxon>Hyphomicrobiales</taxon>
        <taxon>Bartonellaceae</taxon>
        <taxon>Bartonella</taxon>
    </lineage>
</organism>
<feature type="chain" id="PRO_0000237846" description="Shikimate kinase">
    <location>
        <begin position="1"/>
        <end position="210"/>
    </location>
</feature>
<feature type="binding site" evidence="1">
    <location>
        <begin position="34"/>
        <end position="39"/>
    </location>
    <ligand>
        <name>ATP</name>
        <dbReference type="ChEBI" id="CHEBI:30616"/>
    </ligand>
</feature>
<feature type="binding site" evidence="1">
    <location>
        <position position="38"/>
    </location>
    <ligand>
        <name>Mg(2+)</name>
        <dbReference type="ChEBI" id="CHEBI:18420"/>
    </ligand>
</feature>
<feature type="binding site" evidence="1">
    <location>
        <position position="56"/>
    </location>
    <ligand>
        <name>substrate</name>
    </ligand>
</feature>
<feature type="binding site" evidence="1">
    <location>
        <position position="80"/>
    </location>
    <ligand>
        <name>substrate</name>
    </ligand>
</feature>
<feature type="binding site" evidence="1">
    <location>
        <position position="102"/>
    </location>
    <ligand>
        <name>substrate</name>
    </ligand>
</feature>
<feature type="binding site" evidence="1">
    <location>
        <position position="140"/>
    </location>
    <ligand>
        <name>ATP</name>
        <dbReference type="ChEBI" id="CHEBI:30616"/>
    </ligand>
</feature>
<feature type="binding site" evidence="1">
    <location>
        <position position="159"/>
    </location>
    <ligand>
        <name>substrate</name>
    </ligand>
</feature>
<comment type="function">
    <text evidence="1">Catalyzes the specific phosphorylation of the 3-hydroxyl group of shikimic acid using ATP as a cosubstrate.</text>
</comment>
<comment type="catalytic activity">
    <reaction evidence="1">
        <text>shikimate + ATP = 3-phosphoshikimate + ADP + H(+)</text>
        <dbReference type="Rhea" id="RHEA:13121"/>
        <dbReference type="ChEBI" id="CHEBI:15378"/>
        <dbReference type="ChEBI" id="CHEBI:30616"/>
        <dbReference type="ChEBI" id="CHEBI:36208"/>
        <dbReference type="ChEBI" id="CHEBI:145989"/>
        <dbReference type="ChEBI" id="CHEBI:456216"/>
        <dbReference type="EC" id="2.7.1.71"/>
    </reaction>
</comment>
<comment type="cofactor">
    <cofactor evidence="1">
        <name>Mg(2+)</name>
        <dbReference type="ChEBI" id="CHEBI:18420"/>
    </cofactor>
    <text evidence="1">Binds 1 Mg(2+) ion per subunit.</text>
</comment>
<comment type="pathway">
    <text evidence="1">Metabolic intermediate biosynthesis; chorismate biosynthesis; chorismate from D-erythrose 4-phosphate and phosphoenolpyruvate: step 5/7.</text>
</comment>
<comment type="subunit">
    <text evidence="1">Monomer.</text>
</comment>
<comment type="subcellular location">
    <subcellularLocation>
        <location evidence="1">Cytoplasm</location>
    </subcellularLocation>
</comment>
<comment type="similarity">
    <text evidence="1">Belongs to the shikimate kinase family.</text>
</comment>
<name>AROK_BARQU</name>
<protein>
    <recommendedName>
        <fullName evidence="1">Shikimate kinase</fullName>
        <shortName evidence="1">SK</shortName>
        <ecNumber evidence="1">2.7.1.71</ecNumber>
    </recommendedName>
</protein>
<reference key="1">
    <citation type="journal article" date="2004" name="Proc. Natl. Acad. Sci. U.S.A.">
        <title>The louse-borne human pathogen Bartonella quintana is a genomic derivative of the zoonotic agent Bartonella henselae.</title>
        <authorList>
            <person name="Alsmark U.C.M."/>
            <person name="Frank A.C."/>
            <person name="Karlberg E.O."/>
            <person name="Legault B.-A."/>
            <person name="Ardell D.H."/>
            <person name="Canbaeck B."/>
            <person name="Eriksson A.-S."/>
            <person name="Naeslund A.K."/>
            <person name="Handley S.A."/>
            <person name="Huvet M."/>
            <person name="La Scola B."/>
            <person name="Holmberg M."/>
            <person name="Andersson S.G.E."/>
        </authorList>
    </citation>
    <scope>NUCLEOTIDE SEQUENCE [LARGE SCALE GENOMIC DNA]</scope>
    <source>
        <strain>Toulouse</strain>
    </source>
</reference>
<sequence>MKTNHPKHIPITQIKKQLLSSLDKRALVLVGLMGAGKSVIGKRIATMLGLPFYDSDQEIEKAAQMTITEFFKVYGESEFRALEQHVTLSLMKKSPLVLATGGGAYINEDIRQVINKNGISIWLKADLDILMKRVSRHPTRPLLQTANPKETMKKLMEQRYPIYAKANLTINSYKESRHTVAQNVIRSVQNYIYTEINDRNNQHANQDRHC</sequence>
<evidence type="ECO:0000255" key="1">
    <source>
        <dbReference type="HAMAP-Rule" id="MF_00109"/>
    </source>
</evidence>
<dbReference type="EC" id="2.7.1.71" evidence="1"/>
<dbReference type="EMBL" id="BX897700">
    <property type="protein sequence ID" value="CAF26785.1"/>
    <property type="molecule type" value="Genomic_DNA"/>
</dbReference>
<dbReference type="RefSeq" id="WP_011179939.1">
    <property type="nucleotide sequence ID" value="NC_005955.1"/>
</dbReference>
<dbReference type="SMR" id="Q6G1H5"/>
<dbReference type="KEGG" id="bqu:BQ13270"/>
<dbReference type="eggNOG" id="COG0703">
    <property type="taxonomic scope" value="Bacteria"/>
</dbReference>
<dbReference type="HOGENOM" id="CLU_057607_2_0_5"/>
<dbReference type="OrthoDB" id="9800332at2"/>
<dbReference type="UniPathway" id="UPA00053">
    <property type="reaction ID" value="UER00088"/>
</dbReference>
<dbReference type="Proteomes" id="UP000000597">
    <property type="component" value="Chromosome"/>
</dbReference>
<dbReference type="GO" id="GO:0005829">
    <property type="term" value="C:cytosol"/>
    <property type="evidence" value="ECO:0007669"/>
    <property type="project" value="TreeGrafter"/>
</dbReference>
<dbReference type="GO" id="GO:0005524">
    <property type="term" value="F:ATP binding"/>
    <property type="evidence" value="ECO:0007669"/>
    <property type="project" value="UniProtKB-UniRule"/>
</dbReference>
<dbReference type="GO" id="GO:0000287">
    <property type="term" value="F:magnesium ion binding"/>
    <property type="evidence" value="ECO:0007669"/>
    <property type="project" value="UniProtKB-UniRule"/>
</dbReference>
<dbReference type="GO" id="GO:0004765">
    <property type="term" value="F:shikimate kinase activity"/>
    <property type="evidence" value="ECO:0007669"/>
    <property type="project" value="UniProtKB-UniRule"/>
</dbReference>
<dbReference type="GO" id="GO:0008652">
    <property type="term" value="P:amino acid biosynthetic process"/>
    <property type="evidence" value="ECO:0007669"/>
    <property type="project" value="UniProtKB-KW"/>
</dbReference>
<dbReference type="GO" id="GO:0009073">
    <property type="term" value="P:aromatic amino acid family biosynthetic process"/>
    <property type="evidence" value="ECO:0007669"/>
    <property type="project" value="UniProtKB-KW"/>
</dbReference>
<dbReference type="GO" id="GO:0009423">
    <property type="term" value="P:chorismate biosynthetic process"/>
    <property type="evidence" value="ECO:0007669"/>
    <property type="project" value="UniProtKB-UniRule"/>
</dbReference>
<dbReference type="CDD" id="cd00464">
    <property type="entry name" value="SK"/>
    <property type="match status" value="1"/>
</dbReference>
<dbReference type="Gene3D" id="3.40.50.300">
    <property type="entry name" value="P-loop containing nucleotide triphosphate hydrolases"/>
    <property type="match status" value="1"/>
</dbReference>
<dbReference type="HAMAP" id="MF_00109">
    <property type="entry name" value="Shikimate_kinase"/>
    <property type="match status" value="1"/>
</dbReference>
<dbReference type="InterPro" id="IPR027417">
    <property type="entry name" value="P-loop_NTPase"/>
</dbReference>
<dbReference type="InterPro" id="IPR031322">
    <property type="entry name" value="Shikimate/glucono_kinase"/>
</dbReference>
<dbReference type="InterPro" id="IPR000623">
    <property type="entry name" value="Shikimate_kinase/TSH1"/>
</dbReference>
<dbReference type="NCBIfam" id="NF010552">
    <property type="entry name" value="PRK13946.1"/>
    <property type="match status" value="1"/>
</dbReference>
<dbReference type="PANTHER" id="PTHR21087">
    <property type="entry name" value="SHIKIMATE KINASE"/>
    <property type="match status" value="1"/>
</dbReference>
<dbReference type="PANTHER" id="PTHR21087:SF16">
    <property type="entry name" value="SHIKIMATE KINASE 1, CHLOROPLASTIC"/>
    <property type="match status" value="1"/>
</dbReference>
<dbReference type="Pfam" id="PF01202">
    <property type="entry name" value="SKI"/>
    <property type="match status" value="1"/>
</dbReference>
<dbReference type="PRINTS" id="PR01100">
    <property type="entry name" value="SHIKIMTKNASE"/>
</dbReference>
<dbReference type="SUPFAM" id="SSF52540">
    <property type="entry name" value="P-loop containing nucleoside triphosphate hydrolases"/>
    <property type="match status" value="1"/>
</dbReference>